<reference key="1">
    <citation type="journal article" date="2010" name="Genome Biol. Evol.">
        <title>Continuing evolution of Burkholderia mallei through genome reduction and large-scale rearrangements.</title>
        <authorList>
            <person name="Losada L."/>
            <person name="Ronning C.M."/>
            <person name="DeShazer D."/>
            <person name="Woods D."/>
            <person name="Fedorova N."/>
            <person name="Kim H.S."/>
            <person name="Shabalina S.A."/>
            <person name="Pearson T.R."/>
            <person name="Brinkac L."/>
            <person name="Tan P."/>
            <person name="Nandi T."/>
            <person name="Crabtree J."/>
            <person name="Badger J."/>
            <person name="Beckstrom-Sternberg S."/>
            <person name="Saqib M."/>
            <person name="Schutzer S.E."/>
            <person name="Keim P."/>
            <person name="Nierman W.C."/>
        </authorList>
    </citation>
    <scope>NUCLEOTIDE SEQUENCE [LARGE SCALE GENOMIC DNA]</scope>
    <source>
        <strain>1710b</strain>
    </source>
</reference>
<reference key="2">
    <citation type="journal article" date="2011" name="J. Struct. Funct. Genomics">
        <title>SAD phasing using iodide ions in a high-throughput structural genomics environment.</title>
        <authorList>
            <person name="Abendroth J."/>
            <person name="Gardberg A.S."/>
            <person name="Robinson J.I."/>
            <person name="Christensen J.S."/>
            <person name="Staker B.L."/>
            <person name="Myler P.J."/>
            <person name="Stewart L.J."/>
            <person name="Edwards T.E."/>
        </authorList>
    </citation>
    <scope>X-RAY CRYSTALLOGRAPHY (2.20 ANGSTROMS) IN COMPLEX WITH ZINC</scope>
    <scope>COFACTOR</scope>
    <scope>SUBUNIT</scope>
</reference>
<gene>
    <name evidence="5" type="primary">aphA</name>
    <name type="ordered locus">BURPS1710b_1309</name>
</gene>
<dbReference type="EC" id="3.5.1.-" evidence="1"/>
<dbReference type="EC" id="3.5.1.62" evidence="1"/>
<dbReference type="EMBL" id="CP000124">
    <property type="protein sequence ID" value="ABA50461.1"/>
    <property type="molecule type" value="Genomic_DNA"/>
</dbReference>
<dbReference type="RefSeq" id="WP_004526398.1">
    <property type="nucleotide sequence ID" value="NC_007434.1"/>
</dbReference>
<dbReference type="PDB" id="3MEN">
    <property type="method" value="X-ray"/>
    <property type="resolution" value="2.20 A"/>
    <property type="chains" value="A/B/C/D=1-341"/>
</dbReference>
<dbReference type="PDBsum" id="3MEN"/>
<dbReference type="SMR" id="Q3JUN4"/>
<dbReference type="EnsemblBacteria" id="ABA50461">
    <property type="protein sequence ID" value="ABA50461"/>
    <property type="gene ID" value="BURPS1710b_1309"/>
</dbReference>
<dbReference type="KEGG" id="bpm:BURPS1710b_1309"/>
<dbReference type="HOGENOM" id="CLU_007727_8_3_4"/>
<dbReference type="EvolutionaryTrace" id="Q3JUN4"/>
<dbReference type="Proteomes" id="UP000002700">
    <property type="component" value="Chromosome I"/>
</dbReference>
<dbReference type="GO" id="GO:0047609">
    <property type="term" value="F:acetylputrescine deacetylase activity"/>
    <property type="evidence" value="ECO:0007669"/>
    <property type="project" value="UniProtKB-EC"/>
</dbReference>
<dbReference type="GO" id="GO:0004407">
    <property type="term" value="F:histone deacetylase activity"/>
    <property type="evidence" value="ECO:0007669"/>
    <property type="project" value="TreeGrafter"/>
</dbReference>
<dbReference type="GO" id="GO:0046872">
    <property type="term" value="F:metal ion binding"/>
    <property type="evidence" value="ECO:0007669"/>
    <property type="project" value="UniProtKB-KW"/>
</dbReference>
<dbReference type="GO" id="GO:0040029">
    <property type="term" value="P:epigenetic regulation of gene expression"/>
    <property type="evidence" value="ECO:0007669"/>
    <property type="project" value="TreeGrafter"/>
</dbReference>
<dbReference type="CDD" id="cd10001">
    <property type="entry name" value="HDAC_classII_APAH"/>
    <property type="match status" value="1"/>
</dbReference>
<dbReference type="Gene3D" id="3.40.800.20">
    <property type="entry name" value="Histone deacetylase domain"/>
    <property type="match status" value="1"/>
</dbReference>
<dbReference type="InterPro" id="IPR050284">
    <property type="entry name" value="HDAC_PDAC"/>
</dbReference>
<dbReference type="InterPro" id="IPR000286">
    <property type="entry name" value="His_deacetylse"/>
</dbReference>
<dbReference type="InterPro" id="IPR023801">
    <property type="entry name" value="His_deacetylse_dom"/>
</dbReference>
<dbReference type="InterPro" id="IPR037138">
    <property type="entry name" value="His_deacetylse_dom_sf"/>
</dbReference>
<dbReference type="InterPro" id="IPR023696">
    <property type="entry name" value="Ureohydrolase_dom_sf"/>
</dbReference>
<dbReference type="PANTHER" id="PTHR10625:SF17">
    <property type="entry name" value="HISTONE DEACETYLASE 8"/>
    <property type="match status" value="1"/>
</dbReference>
<dbReference type="PANTHER" id="PTHR10625">
    <property type="entry name" value="HISTONE DEACETYLASE HDAC1-RELATED"/>
    <property type="match status" value="1"/>
</dbReference>
<dbReference type="Pfam" id="PF00850">
    <property type="entry name" value="Hist_deacetyl"/>
    <property type="match status" value="1"/>
</dbReference>
<dbReference type="PRINTS" id="PR01270">
    <property type="entry name" value="HDASUPER"/>
</dbReference>
<dbReference type="SUPFAM" id="SSF52768">
    <property type="entry name" value="Arginase/deacetylase"/>
    <property type="match status" value="1"/>
</dbReference>
<accession>Q3JUN4</accession>
<protein>
    <recommendedName>
        <fullName evidence="1">Acetylpolyamine amidohydrolase</fullName>
        <shortName evidence="1">APAH</shortName>
        <ecNumber evidence="1">3.5.1.-</ecNumber>
    </recommendedName>
    <alternativeName>
        <fullName evidence="1">Acetylcadaverine deacetylase</fullName>
    </alternativeName>
    <alternativeName>
        <fullName evidence="1">Acetylpolyamine deacetylase</fullName>
    </alternativeName>
    <alternativeName>
        <fullName evidence="1">Acetylputrescine deacetylase</fullName>
        <ecNumber evidence="1">3.5.1.62</ecNumber>
    </alternativeName>
</protein>
<proteinExistence type="evidence at protein level"/>
<feature type="chain" id="PRO_0000411983" description="Acetylpolyamine amidohydrolase">
    <location>
        <begin position="1"/>
        <end position="341"/>
    </location>
</feature>
<feature type="active site" description="Proton donor/acceptor" evidence="1">
    <location>
        <position position="157"/>
    </location>
</feature>
<feature type="binding site" evidence="2 6">
    <location>
        <position position="192"/>
    </location>
    <ligand>
        <name>Zn(2+)</name>
        <dbReference type="ChEBI" id="CHEBI:29105"/>
    </ligand>
</feature>
<feature type="binding site" evidence="2 6">
    <location>
        <position position="194"/>
    </location>
    <ligand>
        <name>Zn(2+)</name>
        <dbReference type="ChEBI" id="CHEBI:29105"/>
    </ligand>
</feature>
<feature type="binding site" evidence="2 6">
    <location>
        <position position="281"/>
    </location>
    <ligand>
        <name>Zn(2+)</name>
        <dbReference type="ChEBI" id="CHEBI:29105"/>
    </ligand>
</feature>
<feature type="site" description="Polarizes the scissile carbonyl of the substrate" evidence="1">
    <location>
        <position position="320"/>
    </location>
</feature>
<feature type="strand" evidence="7">
    <location>
        <begin position="2"/>
        <end position="4"/>
    </location>
</feature>
<feature type="helix" evidence="7">
    <location>
        <begin position="7"/>
        <end position="11"/>
    </location>
</feature>
<feature type="strand" evidence="7">
    <location>
        <begin position="17"/>
        <end position="19"/>
    </location>
</feature>
<feature type="strand" evidence="7">
    <location>
        <begin position="22"/>
        <end position="24"/>
    </location>
</feature>
<feature type="helix" evidence="7">
    <location>
        <begin position="31"/>
        <end position="42"/>
    </location>
</feature>
<feature type="helix" evidence="7">
    <location>
        <begin position="56"/>
        <end position="59"/>
    </location>
</feature>
<feature type="helix" evidence="7">
    <location>
        <begin position="64"/>
        <end position="78"/>
    </location>
</feature>
<feature type="helix" evidence="7">
    <location>
        <begin position="82"/>
        <end position="84"/>
    </location>
</feature>
<feature type="strand" evidence="7">
    <location>
        <begin position="86"/>
        <end position="88"/>
    </location>
</feature>
<feature type="helix" evidence="7">
    <location>
        <begin position="103"/>
        <end position="110"/>
    </location>
</feature>
<feature type="helix" evidence="7">
    <location>
        <begin position="122"/>
        <end position="141"/>
    </location>
</feature>
<feature type="strand" evidence="7">
    <location>
        <begin position="145"/>
        <end position="149"/>
    </location>
</feature>
<feature type="strand" evidence="7">
    <location>
        <begin position="162"/>
        <end position="164"/>
    </location>
</feature>
<feature type="strand" evidence="7">
    <location>
        <begin position="167"/>
        <end position="169"/>
    </location>
</feature>
<feature type="helix" evidence="7">
    <location>
        <begin position="171"/>
        <end position="179"/>
    </location>
</feature>
<feature type="turn" evidence="7">
    <location>
        <begin position="180"/>
        <end position="182"/>
    </location>
</feature>
<feature type="strand" evidence="7">
    <location>
        <begin position="186"/>
        <end position="190"/>
    </location>
</feature>
<feature type="strand" evidence="7">
    <location>
        <begin position="192"/>
        <end position="194"/>
    </location>
</feature>
<feature type="helix" evidence="7">
    <location>
        <begin position="197"/>
        <end position="202"/>
    </location>
</feature>
<feature type="turn" evidence="7">
    <location>
        <begin position="203"/>
        <end position="205"/>
    </location>
</feature>
<feature type="strand" evidence="7">
    <location>
        <begin position="207"/>
        <end position="216"/>
    </location>
</feature>
<feature type="helix" evidence="7">
    <location>
        <begin position="235"/>
        <end position="237"/>
    </location>
</feature>
<feature type="strand" evidence="7">
    <location>
        <begin position="240"/>
        <end position="246"/>
    </location>
</feature>
<feature type="helix" evidence="7">
    <location>
        <begin position="252"/>
        <end position="269"/>
    </location>
</feature>
<feature type="strand" evidence="7">
    <location>
        <begin position="272"/>
        <end position="278"/>
    </location>
</feature>
<feature type="helix" evidence="7">
    <location>
        <begin position="295"/>
        <end position="306"/>
    </location>
</feature>
<feature type="strand" evidence="7">
    <location>
        <begin position="312"/>
        <end position="316"/>
    </location>
</feature>
<feature type="helix" evidence="7">
    <location>
        <begin position="322"/>
        <end position="324"/>
    </location>
</feature>
<feature type="helix" evidence="7">
    <location>
        <begin position="325"/>
        <end position="336"/>
    </location>
</feature>
<comment type="function">
    <text evidence="1">Involved in polyamine metabolism. Catalyzes the deacetylation of various acetylated polyamines such as N-acetylputrescine and N-acetylcadaverine.</text>
</comment>
<comment type="catalytic activity">
    <reaction evidence="1">
        <text>N-acetylputrescine + H2O = putrescine + acetate</text>
        <dbReference type="Rhea" id="RHEA:23412"/>
        <dbReference type="ChEBI" id="CHEBI:15377"/>
        <dbReference type="ChEBI" id="CHEBI:30089"/>
        <dbReference type="ChEBI" id="CHEBI:58263"/>
        <dbReference type="ChEBI" id="CHEBI:326268"/>
        <dbReference type="EC" id="3.5.1.62"/>
    </reaction>
</comment>
<comment type="catalytic activity">
    <reaction evidence="1">
        <text>N-acetylcadaverine + H2O = cadaverine + acetate</text>
        <dbReference type="Rhea" id="RHEA:51892"/>
        <dbReference type="ChEBI" id="CHEBI:15377"/>
        <dbReference type="ChEBI" id="CHEBI:30089"/>
        <dbReference type="ChEBI" id="CHEBI:58384"/>
        <dbReference type="ChEBI" id="CHEBI:134408"/>
    </reaction>
</comment>
<comment type="cofactor">
    <cofactor evidence="1">
        <name>Zn(2+)</name>
        <dbReference type="ChEBI" id="CHEBI:29105"/>
    </cofactor>
    <text evidence="2">Binds 1 zinc ion per subunit.</text>
</comment>
<comment type="pathway">
    <text evidence="1">Amine and polyamine metabolism.</text>
</comment>
<comment type="subunit">
    <text evidence="4">Homodimer.</text>
</comment>
<comment type="similarity">
    <text evidence="3">Belongs to the histone deacetylase family.</text>
</comment>
<name>APAHL_BURP1</name>
<keyword id="KW-0002">3D-structure</keyword>
<keyword id="KW-0378">Hydrolase</keyword>
<keyword id="KW-0479">Metal-binding</keyword>
<keyword id="KW-0862">Zinc</keyword>
<organism>
    <name type="scientific">Burkholderia pseudomallei (strain 1710b)</name>
    <dbReference type="NCBI Taxonomy" id="320372"/>
    <lineage>
        <taxon>Bacteria</taxon>
        <taxon>Pseudomonadati</taxon>
        <taxon>Pseudomonadota</taxon>
        <taxon>Betaproteobacteria</taxon>
        <taxon>Burkholderiales</taxon>
        <taxon>Burkholderiaceae</taxon>
        <taxon>Burkholderia</taxon>
        <taxon>pseudomallei group</taxon>
    </lineage>
</organism>
<evidence type="ECO:0000250" key="1">
    <source>
        <dbReference type="UniProtKB" id="Q48935"/>
    </source>
</evidence>
<evidence type="ECO:0000269" key="2">
    <source>
    </source>
</evidence>
<evidence type="ECO:0000305" key="3"/>
<evidence type="ECO:0000305" key="4">
    <source>
    </source>
</evidence>
<evidence type="ECO:0000312" key="5">
    <source>
        <dbReference type="EMBL" id="ABA50461.1"/>
    </source>
</evidence>
<evidence type="ECO:0007744" key="6">
    <source>
        <dbReference type="PDB" id="3MEN"/>
    </source>
</evidence>
<evidence type="ECO:0007829" key="7">
    <source>
        <dbReference type="PDB" id="3MEN"/>
    </source>
</evidence>
<sequence>MLTYFHPDQSLHHPRTYFSRGRMRMPQEVPERAARLVAAAFAMGFPVREPDDFGIAPIAAVHDTHYLRFLETVHREWKAMPEDWGDEAMSNIFVREPNALRGVLAQAARHLADGSCPVGEHTWRAAYWSAQSALAAAAAVRDGAPAAYALCRPPGHHARVDAAGGFCYLNNAAIAAQALRARHARVAVLDTDMHHGQGIQEIFYARRDVLYVSIHGDPTNFYPAVAGFDDERGAGEGLGYNVNLPMPHGSSEAAFFERVDDALRELRRFAPDALVLSLGFDVYRDDPQSQVAVTTDGFGRLGHLIGALRLPTVIVQEGGYHIESLEANARSFFGGFGALRG</sequence>